<sequence length="225" mass="25500">MMYHIPGVLSPQDVARFREQLEQAEWVDGRVTTGAQGAQVKNNQQVDTRSALYAALQNEVLNAVNQHALFFAAALPRTLSTPLFNRYQNNETYGFHVDGAVRSHPQNGWMRTDLSATLFLSDPESYDGGELVVNDTFGQHRVKLPAGDLVLYPSSSLHCVTPVTRGVRVASFMWIQSMIRDDKKRAMLFELDNNIQSLKSRYGESEEILSLLNLYHNLLREWSEI</sequence>
<proteinExistence type="inferred from homology"/>
<comment type="cofactor">
    <cofactor evidence="1">
        <name>Fe(2+)</name>
        <dbReference type="ChEBI" id="CHEBI:29033"/>
    </cofactor>
    <text evidence="1">Binds 1 Fe(2+) ion per subunit.</text>
</comment>
<comment type="cofactor">
    <cofactor evidence="1">
        <name>L-ascorbate</name>
        <dbReference type="ChEBI" id="CHEBI:38290"/>
    </cofactor>
</comment>
<comment type="sequence caution" evidence="2">
    <conflict type="erroneous initiation">
        <sequence resource="EMBL-CDS" id="ABE06293"/>
    </conflict>
</comment>
<name>YBIX_ECOUT</name>
<reference key="1">
    <citation type="journal article" date="2006" name="Proc. Natl. Acad. Sci. U.S.A.">
        <title>Identification of genes subject to positive selection in uropathogenic strains of Escherichia coli: a comparative genomics approach.</title>
        <authorList>
            <person name="Chen S.L."/>
            <person name="Hung C.-S."/>
            <person name="Xu J."/>
            <person name="Reigstad C.S."/>
            <person name="Magrini V."/>
            <person name="Sabo A."/>
            <person name="Blasiar D."/>
            <person name="Bieri T."/>
            <person name="Meyer R.R."/>
            <person name="Ozersky P."/>
            <person name="Armstrong J.R."/>
            <person name="Fulton R.S."/>
            <person name="Latreille J.P."/>
            <person name="Spieth J."/>
            <person name="Hooton T.M."/>
            <person name="Mardis E.R."/>
            <person name="Hultgren S.J."/>
            <person name="Gordon J.I."/>
        </authorList>
    </citation>
    <scope>NUCLEOTIDE SEQUENCE [LARGE SCALE GENOMIC DNA]</scope>
    <source>
        <strain>UTI89 / UPEC</strain>
    </source>
</reference>
<protein>
    <recommendedName>
        <fullName evidence="1">PKHD-type hydroxylase YbiX</fullName>
        <ecNumber evidence="1">1.14.11.-</ecNumber>
    </recommendedName>
</protein>
<evidence type="ECO:0000255" key="1">
    <source>
        <dbReference type="HAMAP-Rule" id="MF_00657"/>
    </source>
</evidence>
<evidence type="ECO:0000305" key="2"/>
<dbReference type="EC" id="1.14.11.-" evidence="1"/>
<dbReference type="EMBL" id="CP000243">
    <property type="protein sequence ID" value="ABE06293.1"/>
    <property type="status" value="ALT_INIT"/>
    <property type="molecule type" value="Genomic_DNA"/>
</dbReference>
<dbReference type="RefSeq" id="WP_000990167.1">
    <property type="nucleotide sequence ID" value="NZ_CP064825.1"/>
</dbReference>
<dbReference type="SMR" id="Q1REC1"/>
<dbReference type="KEGG" id="eci:UTI89_C0807"/>
<dbReference type="HOGENOM" id="CLU_106663_0_0_6"/>
<dbReference type="Proteomes" id="UP000001952">
    <property type="component" value="Chromosome"/>
</dbReference>
<dbReference type="GO" id="GO:0016706">
    <property type="term" value="F:2-oxoglutarate-dependent dioxygenase activity"/>
    <property type="evidence" value="ECO:0007669"/>
    <property type="project" value="UniProtKB-UniRule"/>
</dbReference>
<dbReference type="GO" id="GO:0005506">
    <property type="term" value="F:iron ion binding"/>
    <property type="evidence" value="ECO:0007669"/>
    <property type="project" value="UniProtKB-UniRule"/>
</dbReference>
<dbReference type="GO" id="GO:0031418">
    <property type="term" value="F:L-ascorbic acid binding"/>
    <property type="evidence" value="ECO:0007669"/>
    <property type="project" value="UniProtKB-KW"/>
</dbReference>
<dbReference type="GO" id="GO:0006974">
    <property type="term" value="P:DNA damage response"/>
    <property type="evidence" value="ECO:0007669"/>
    <property type="project" value="TreeGrafter"/>
</dbReference>
<dbReference type="GO" id="GO:0006879">
    <property type="term" value="P:intracellular iron ion homeostasis"/>
    <property type="evidence" value="ECO:0007669"/>
    <property type="project" value="TreeGrafter"/>
</dbReference>
<dbReference type="FunFam" id="2.60.120.620:FF:000006">
    <property type="entry name" value="PKHD-type hydroxylase YbiX"/>
    <property type="match status" value="1"/>
</dbReference>
<dbReference type="FunFam" id="4.10.860.20:FF:000001">
    <property type="entry name" value="PKHD-type hydroxylase YbiX"/>
    <property type="match status" value="1"/>
</dbReference>
<dbReference type="Gene3D" id="2.60.120.620">
    <property type="entry name" value="q2cbj1_9rhob like domain"/>
    <property type="match status" value="1"/>
</dbReference>
<dbReference type="Gene3D" id="4.10.860.20">
    <property type="entry name" value="Rabenosyn, Rab binding domain"/>
    <property type="match status" value="1"/>
</dbReference>
<dbReference type="HAMAP" id="MF_00657">
    <property type="entry name" value="Hydroxyl_YbiX"/>
    <property type="match status" value="1"/>
</dbReference>
<dbReference type="InterPro" id="IPR005123">
    <property type="entry name" value="Oxoglu/Fe-dep_dioxygenase_dom"/>
</dbReference>
<dbReference type="InterPro" id="IPR041097">
    <property type="entry name" value="PKHD_C"/>
</dbReference>
<dbReference type="InterPro" id="IPR023550">
    <property type="entry name" value="PKHD_hydroxylase"/>
</dbReference>
<dbReference type="InterPro" id="IPR006620">
    <property type="entry name" value="Pro_4_hyd_alph"/>
</dbReference>
<dbReference type="InterPro" id="IPR044862">
    <property type="entry name" value="Pro_4_hyd_alph_FE2OG_OXY"/>
</dbReference>
<dbReference type="NCBIfam" id="NF003972">
    <property type="entry name" value="PRK05467.1-1"/>
    <property type="match status" value="1"/>
</dbReference>
<dbReference type="NCBIfam" id="NF003974">
    <property type="entry name" value="PRK05467.1-3"/>
    <property type="match status" value="1"/>
</dbReference>
<dbReference type="NCBIfam" id="NF003975">
    <property type="entry name" value="PRK05467.1-4"/>
    <property type="match status" value="1"/>
</dbReference>
<dbReference type="PANTHER" id="PTHR41536">
    <property type="entry name" value="PKHD-TYPE HYDROXYLASE YBIX"/>
    <property type="match status" value="1"/>
</dbReference>
<dbReference type="PANTHER" id="PTHR41536:SF1">
    <property type="entry name" value="PKHD-TYPE HYDROXYLASE YBIX"/>
    <property type="match status" value="1"/>
</dbReference>
<dbReference type="Pfam" id="PF13640">
    <property type="entry name" value="2OG-FeII_Oxy_3"/>
    <property type="match status" value="1"/>
</dbReference>
<dbReference type="Pfam" id="PF18331">
    <property type="entry name" value="PKHD_C"/>
    <property type="match status" value="1"/>
</dbReference>
<dbReference type="SMART" id="SM00702">
    <property type="entry name" value="P4Hc"/>
    <property type="match status" value="1"/>
</dbReference>
<dbReference type="SUPFAM" id="SSF51197">
    <property type="entry name" value="Clavaminate synthase-like"/>
    <property type="match status" value="1"/>
</dbReference>
<dbReference type="PROSITE" id="PS51471">
    <property type="entry name" value="FE2OG_OXY"/>
    <property type="match status" value="1"/>
</dbReference>
<gene>
    <name evidence="1" type="primary">ybiX</name>
    <name type="ordered locus">UTI89_C0807</name>
</gene>
<feature type="chain" id="PRO_0000346481" description="PKHD-type hydroxylase YbiX">
    <location>
        <begin position="1"/>
        <end position="225"/>
    </location>
</feature>
<feature type="domain" description="Fe2OG dioxygenase" evidence="1">
    <location>
        <begin position="78"/>
        <end position="177"/>
    </location>
</feature>
<feature type="binding site" evidence="1">
    <location>
        <position position="96"/>
    </location>
    <ligand>
        <name>Fe cation</name>
        <dbReference type="ChEBI" id="CHEBI:24875"/>
    </ligand>
</feature>
<feature type="binding site" evidence="1">
    <location>
        <position position="98"/>
    </location>
    <ligand>
        <name>Fe cation</name>
        <dbReference type="ChEBI" id="CHEBI:24875"/>
    </ligand>
</feature>
<feature type="binding site" evidence="1">
    <location>
        <position position="158"/>
    </location>
    <ligand>
        <name>Fe cation</name>
        <dbReference type="ChEBI" id="CHEBI:24875"/>
    </ligand>
</feature>
<feature type="binding site" evidence="1">
    <location>
        <position position="168"/>
    </location>
    <ligand>
        <name>2-oxoglutarate</name>
        <dbReference type="ChEBI" id="CHEBI:16810"/>
    </ligand>
</feature>
<organism>
    <name type="scientific">Escherichia coli (strain UTI89 / UPEC)</name>
    <dbReference type="NCBI Taxonomy" id="364106"/>
    <lineage>
        <taxon>Bacteria</taxon>
        <taxon>Pseudomonadati</taxon>
        <taxon>Pseudomonadota</taxon>
        <taxon>Gammaproteobacteria</taxon>
        <taxon>Enterobacterales</taxon>
        <taxon>Enterobacteriaceae</taxon>
        <taxon>Escherichia</taxon>
    </lineage>
</organism>
<accession>Q1REC1</accession>
<keyword id="KW-0223">Dioxygenase</keyword>
<keyword id="KW-0408">Iron</keyword>
<keyword id="KW-0479">Metal-binding</keyword>
<keyword id="KW-0560">Oxidoreductase</keyword>
<keyword id="KW-0847">Vitamin C</keyword>